<protein>
    <recommendedName>
        <fullName>Transmembrane protein 185B</fullName>
    </recommendedName>
    <alternativeName>
        <fullName>Erythropoietin-induced EST 3-2</fullName>
    </alternativeName>
    <alternativeName>
        <fullName>Protein FAM11B</fullName>
    </alternativeName>
</protein>
<sequence>MNPRGLFQDFNPSKFLIYACLLLFSVLLPLRLDGIIQWSYWAVFAPIWLWKLLVIVGASVGAGVWARNPRYRTEGEACVEFKAMLIAVGIHLLLLMFEILVCDRVERGTHFWLLVFMPLFFVSPVSVAACVWGFRHDRSLELEILCSVNILQFIFIALRLDRIIHWPWLVVFVPLWILMSFLCLVVLYYIVWSLLFLRSLDVVAEQRRTHVTMAISWITIVVPLLIFEVLLVHRLDDHNTFSYISIFIPLWLSLLTLMATTFRRKGGNHWWFGIRRDFCQFLLEVFPFLREYGNISYDLHHEDSEDAEDASVSEAPKIAPMFGKKARVVITQSPGKYVPPPPKLNIDMPD</sequence>
<evidence type="ECO:0000255" key="1"/>
<evidence type="ECO:0000305" key="2"/>
<reference key="1">
    <citation type="journal article" date="2005" name="Science">
        <title>The transcriptional landscape of the mammalian genome.</title>
        <authorList>
            <person name="Carninci P."/>
            <person name="Kasukawa T."/>
            <person name="Katayama S."/>
            <person name="Gough J."/>
            <person name="Frith M.C."/>
            <person name="Maeda N."/>
            <person name="Oyama R."/>
            <person name="Ravasi T."/>
            <person name="Lenhard B."/>
            <person name="Wells C."/>
            <person name="Kodzius R."/>
            <person name="Shimokawa K."/>
            <person name="Bajic V.B."/>
            <person name="Brenner S.E."/>
            <person name="Batalov S."/>
            <person name="Forrest A.R."/>
            <person name="Zavolan M."/>
            <person name="Davis M.J."/>
            <person name="Wilming L.G."/>
            <person name="Aidinis V."/>
            <person name="Allen J.E."/>
            <person name="Ambesi-Impiombato A."/>
            <person name="Apweiler R."/>
            <person name="Aturaliya R.N."/>
            <person name="Bailey T.L."/>
            <person name="Bansal M."/>
            <person name="Baxter L."/>
            <person name="Beisel K.W."/>
            <person name="Bersano T."/>
            <person name="Bono H."/>
            <person name="Chalk A.M."/>
            <person name="Chiu K.P."/>
            <person name="Choudhary V."/>
            <person name="Christoffels A."/>
            <person name="Clutterbuck D.R."/>
            <person name="Crowe M.L."/>
            <person name="Dalla E."/>
            <person name="Dalrymple B.P."/>
            <person name="de Bono B."/>
            <person name="Della Gatta G."/>
            <person name="di Bernardo D."/>
            <person name="Down T."/>
            <person name="Engstrom P."/>
            <person name="Fagiolini M."/>
            <person name="Faulkner G."/>
            <person name="Fletcher C.F."/>
            <person name="Fukushima T."/>
            <person name="Furuno M."/>
            <person name="Futaki S."/>
            <person name="Gariboldi M."/>
            <person name="Georgii-Hemming P."/>
            <person name="Gingeras T.R."/>
            <person name="Gojobori T."/>
            <person name="Green R.E."/>
            <person name="Gustincich S."/>
            <person name="Harbers M."/>
            <person name="Hayashi Y."/>
            <person name="Hensch T.K."/>
            <person name="Hirokawa N."/>
            <person name="Hill D."/>
            <person name="Huminiecki L."/>
            <person name="Iacono M."/>
            <person name="Ikeo K."/>
            <person name="Iwama A."/>
            <person name="Ishikawa T."/>
            <person name="Jakt M."/>
            <person name="Kanapin A."/>
            <person name="Katoh M."/>
            <person name="Kawasawa Y."/>
            <person name="Kelso J."/>
            <person name="Kitamura H."/>
            <person name="Kitano H."/>
            <person name="Kollias G."/>
            <person name="Krishnan S.P."/>
            <person name="Kruger A."/>
            <person name="Kummerfeld S.K."/>
            <person name="Kurochkin I.V."/>
            <person name="Lareau L.F."/>
            <person name="Lazarevic D."/>
            <person name="Lipovich L."/>
            <person name="Liu J."/>
            <person name="Liuni S."/>
            <person name="McWilliam S."/>
            <person name="Madan Babu M."/>
            <person name="Madera M."/>
            <person name="Marchionni L."/>
            <person name="Matsuda H."/>
            <person name="Matsuzawa S."/>
            <person name="Miki H."/>
            <person name="Mignone F."/>
            <person name="Miyake S."/>
            <person name="Morris K."/>
            <person name="Mottagui-Tabar S."/>
            <person name="Mulder N."/>
            <person name="Nakano N."/>
            <person name="Nakauchi H."/>
            <person name="Ng P."/>
            <person name="Nilsson R."/>
            <person name="Nishiguchi S."/>
            <person name="Nishikawa S."/>
            <person name="Nori F."/>
            <person name="Ohara O."/>
            <person name="Okazaki Y."/>
            <person name="Orlando V."/>
            <person name="Pang K.C."/>
            <person name="Pavan W.J."/>
            <person name="Pavesi G."/>
            <person name="Pesole G."/>
            <person name="Petrovsky N."/>
            <person name="Piazza S."/>
            <person name="Reed J."/>
            <person name="Reid J.F."/>
            <person name="Ring B.Z."/>
            <person name="Ringwald M."/>
            <person name="Rost B."/>
            <person name="Ruan Y."/>
            <person name="Salzberg S.L."/>
            <person name="Sandelin A."/>
            <person name="Schneider C."/>
            <person name="Schoenbach C."/>
            <person name="Sekiguchi K."/>
            <person name="Semple C.A."/>
            <person name="Seno S."/>
            <person name="Sessa L."/>
            <person name="Sheng Y."/>
            <person name="Shibata Y."/>
            <person name="Shimada H."/>
            <person name="Shimada K."/>
            <person name="Silva D."/>
            <person name="Sinclair B."/>
            <person name="Sperling S."/>
            <person name="Stupka E."/>
            <person name="Sugiura K."/>
            <person name="Sultana R."/>
            <person name="Takenaka Y."/>
            <person name="Taki K."/>
            <person name="Tammoja K."/>
            <person name="Tan S.L."/>
            <person name="Tang S."/>
            <person name="Taylor M.S."/>
            <person name="Tegner J."/>
            <person name="Teichmann S.A."/>
            <person name="Ueda H.R."/>
            <person name="van Nimwegen E."/>
            <person name="Verardo R."/>
            <person name="Wei C.L."/>
            <person name="Yagi K."/>
            <person name="Yamanishi H."/>
            <person name="Zabarovsky E."/>
            <person name="Zhu S."/>
            <person name="Zimmer A."/>
            <person name="Hide W."/>
            <person name="Bult C."/>
            <person name="Grimmond S.M."/>
            <person name="Teasdale R.D."/>
            <person name="Liu E.T."/>
            <person name="Brusic V."/>
            <person name="Quackenbush J."/>
            <person name="Wahlestedt C."/>
            <person name="Mattick J.S."/>
            <person name="Hume D.A."/>
            <person name="Kai C."/>
            <person name="Sasaki D."/>
            <person name="Tomaru Y."/>
            <person name="Fukuda S."/>
            <person name="Kanamori-Katayama M."/>
            <person name="Suzuki M."/>
            <person name="Aoki J."/>
            <person name="Arakawa T."/>
            <person name="Iida J."/>
            <person name="Imamura K."/>
            <person name="Itoh M."/>
            <person name="Kato T."/>
            <person name="Kawaji H."/>
            <person name="Kawagashira N."/>
            <person name="Kawashima T."/>
            <person name="Kojima M."/>
            <person name="Kondo S."/>
            <person name="Konno H."/>
            <person name="Nakano K."/>
            <person name="Ninomiya N."/>
            <person name="Nishio T."/>
            <person name="Okada M."/>
            <person name="Plessy C."/>
            <person name="Shibata K."/>
            <person name="Shiraki T."/>
            <person name="Suzuki S."/>
            <person name="Tagami M."/>
            <person name="Waki K."/>
            <person name="Watahiki A."/>
            <person name="Okamura-Oho Y."/>
            <person name="Suzuki H."/>
            <person name="Kawai J."/>
            <person name="Hayashizaki Y."/>
        </authorList>
    </citation>
    <scope>NUCLEOTIDE SEQUENCE [LARGE SCALE MRNA]</scope>
    <source>
        <strain>C57BL/6J</strain>
        <tissue>Forelimb</tissue>
    </source>
</reference>
<reference key="2">
    <citation type="journal article" date="2004" name="Genome Res.">
        <title>The status, quality, and expansion of the NIH full-length cDNA project: the Mammalian Gene Collection (MGC).</title>
        <authorList>
            <consortium name="The MGC Project Team"/>
        </authorList>
    </citation>
    <scope>NUCLEOTIDE SEQUENCE [LARGE SCALE MRNA]</scope>
</reference>
<reference key="3">
    <citation type="journal article" date="2004" name="J. Neurochem.">
        <title>Cloning of a novel neuronally expressed orphan G-protein-coupled receptor which is up-regulated by erythropoietin, interacts with microtubule-associated protein 1b and colocalizes with the 5-hydroxytryptamine 2a receptor.</title>
        <authorList>
            <person name="Maurer M.H."/>
            <person name="Gruenewald S."/>
            <person name="Gassler N."/>
            <person name="Rossner M."/>
            <person name="Propst F."/>
            <person name="Wuerz R."/>
            <person name="Weber D."/>
            <person name="Kuner T."/>
            <person name="Kuschinsky W."/>
            <person name="Schneider A."/>
        </authorList>
    </citation>
    <scope>IDENTIFICATION</scope>
</reference>
<proteinExistence type="evidence at transcript level"/>
<keyword id="KW-0472">Membrane</keyword>
<keyword id="KW-1185">Reference proteome</keyword>
<keyword id="KW-0812">Transmembrane</keyword>
<keyword id="KW-1133">Transmembrane helix</keyword>
<feature type="chain" id="PRO_0000188010" description="Transmembrane protein 185B">
    <location>
        <begin position="1"/>
        <end position="350"/>
    </location>
</feature>
<feature type="transmembrane region" description="Helical" evidence="1">
    <location>
        <begin position="16"/>
        <end position="36"/>
    </location>
</feature>
<feature type="transmembrane region" description="Helical" evidence="1">
    <location>
        <begin position="41"/>
        <end position="61"/>
    </location>
</feature>
<feature type="transmembrane region" description="Helical" evidence="1">
    <location>
        <begin position="81"/>
        <end position="101"/>
    </location>
</feature>
<feature type="transmembrane region" description="Helical" evidence="1">
    <location>
        <begin position="111"/>
        <end position="131"/>
    </location>
</feature>
<feature type="transmembrane region" description="Helical" evidence="1">
    <location>
        <begin position="168"/>
        <end position="188"/>
    </location>
</feature>
<feature type="transmembrane region" description="Helical" evidence="1">
    <location>
        <begin position="211"/>
        <end position="231"/>
    </location>
</feature>
<feature type="transmembrane region" description="Helical" evidence="1">
    <location>
        <begin position="240"/>
        <end position="260"/>
    </location>
</feature>
<name>T185B_MOUSE</name>
<dbReference type="EMBL" id="AK031130">
    <property type="protein sequence ID" value="BAC27267.1"/>
    <property type="status" value="ALT_FRAME"/>
    <property type="molecule type" value="mRNA"/>
</dbReference>
<dbReference type="EMBL" id="BC024712">
    <property type="protein sequence ID" value="AAH24712.1"/>
    <property type="molecule type" value="mRNA"/>
</dbReference>
<dbReference type="CCDS" id="CCDS69932.1"/>
<dbReference type="RefSeq" id="NP_666215.1">
    <property type="nucleotide sequence ID" value="NM_146103.2"/>
</dbReference>
<dbReference type="BioGRID" id="230500">
    <property type="interactions" value="1"/>
</dbReference>
<dbReference type="FunCoup" id="Q8R3R5">
    <property type="interactions" value="153"/>
</dbReference>
<dbReference type="STRING" id="10090.ENSMUSP00000139021"/>
<dbReference type="iPTMnet" id="Q8R3R5"/>
<dbReference type="PhosphoSitePlus" id="Q8R3R5"/>
<dbReference type="SwissPalm" id="Q8R3R5"/>
<dbReference type="PaxDb" id="10090-ENSMUSP00000139021"/>
<dbReference type="ProteomicsDB" id="254529"/>
<dbReference type="Ensembl" id="ENSMUST00000183952.2">
    <property type="protein sequence ID" value="ENSMUSP00000139021.2"/>
    <property type="gene ID" value="ENSMUSG00000098923.2"/>
</dbReference>
<dbReference type="GeneID" id="226351"/>
<dbReference type="KEGG" id="mmu:226351"/>
<dbReference type="UCSC" id="uc007ciu.2">
    <property type="organism name" value="mouse"/>
</dbReference>
<dbReference type="AGR" id="MGI:1917634"/>
<dbReference type="CTD" id="79134"/>
<dbReference type="MGI" id="MGI:1917634">
    <property type="gene designation" value="Tmem185b"/>
</dbReference>
<dbReference type="VEuPathDB" id="HostDB:ENSMUSG00000098923"/>
<dbReference type="eggNOG" id="KOG3879">
    <property type="taxonomic scope" value="Eukaryota"/>
</dbReference>
<dbReference type="GeneTree" id="ENSGT00940000163000"/>
<dbReference type="HOGENOM" id="CLU_053027_0_0_1"/>
<dbReference type="InParanoid" id="Q8R3R5"/>
<dbReference type="OMA" id="PFEFEFF"/>
<dbReference type="OrthoDB" id="72976at2759"/>
<dbReference type="PhylomeDB" id="Q8R3R5"/>
<dbReference type="BioGRID-ORCS" id="226351">
    <property type="hits" value="2 hits in 71 CRISPR screens"/>
</dbReference>
<dbReference type="ChiTaRS" id="Tmem185b">
    <property type="organism name" value="mouse"/>
</dbReference>
<dbReference type="PRO" id="PR:Q8R3R5"/>
<dbReference type="Proteomes" id="UP000000589">
    <property type="component" value="Chromosome 1"/>
</dbReference>
<dbReference type="RNAct" id="Q8R3R5">
    <property type="molecule type" value="protein"/>
</dbReference>
<dbReference type="Bgee" id="ENSMUSG00000098923">
    <property type="expression patterns" value="Expressed in humerus cartilage element and 243 other cell types or tissues"/>
</dbReference>
<dbReference type="GO" id="GO:0016020">
    <property type="term" value="C:membrane"/>
    <property type="evidence" value="ECO:0007669"/>
    <property type="project" value="UniProtKB-SubCell"/>
</dbReference>
<dbReference type="InterPro" id="IPR019396">
    <property type="entry name" value="TM_Fragile-X-F-assoc"/>
</dbReference>
<dbReference type="PANTHER" id="PTHR13568">
    <property type="entry name" value="FAM11A, B PROTEIN"/>
    <property type="match status" value="1"/>
</dbReference>
<dbReference type="PANTHER" id="PTHR13568:SF5">
    <property type="entry name" value="TRANSMEMBRANE PROTEIN 185B"/>
    <property type="match status" value="1"/>
</dbReference>
<dbReference type="Pfam" id="PF10269">
    <property type="entry name" value="Tmemb_185A"/>
    <property type="match status" value="1"/>
</dbReference>
<comment type="subcellular location">
    <subcellularLocation>
        <location evidence="2">Membrane</location>
        <topology evidence="2">Multi-pass membrane protein</topology>
    </subcellularLocation>
</comment>
<comment type="similarity">
    <text evidence="2">Belongs to the TMEM185 family.</text>
</comment>
<comment type="sequence caution" evidence="2">
    <conflict type="frameshift">
        <sequence resource="EMBL-CDS" id="BAC27267"/>
    </conflict>
</comment>
<organism>
    <name type="scientific">Mus musculus</name>
    <name type="common">Mouse</name>
    <dbReference type="NCBI Taxonomy" id="10090"/>
    <lineage>
        <taxon>Eukaryota</taxon>
        <taxon>Metazoa</taxon>
        <taxon>Chordata</taxon>
        <taxon>Craniata</taxon>
        <taxon>Vertebrata</taxon>
        <taxon>Euteleostomi</taxon>
        <taxon>Mammalia</taxon>
        <taxon>Eutheria</taxon>
        <taxon>Euarchontoglires</taxon>
        <taxon>Glires</taxon>
        <taxon>Rodentia</taxon>
        <taxon>Myomorpha</taxon>
        <taxon>Muroidea</taxon>
        <taxon>Muridae</taxon>
        <taxon>Murinae</taxon>
        <taxon>Mus</taxon>
        <taxon>Mus</taxon>
    </lineage>
</organism>
<gene>
    <name type="primary">Tmem185b</name>
    <name type="synonym">Ee3-2</name>
    <name type="synonym">Fam11b</name>
</gene>
<accession>Q8R3R5</accession>
<accession>Q8BSP3</accession>